<accession>Q60263</accession>
<keyword id="KW-0472">Membrane</keyword>
<keyword id="KW-0614">Plasmid</keyword>
<keyword id="KW-1185">Reference proteome</keyword>
<keyword id="KW-0812">Transmembrane</keyword>
<keyword id="KW-1133">Transmembrane helix</keyword>
<protein>
    <recommendedName>
        <fullName>Uncharacterized protein MJECL16</fullName>
    </recommendedName>
</protein>
<sequence length="70" mass="8592">MSILISNKQFNHGLKDEFATKKDLELLEERILRYVDNKFNQLDKKIDRTFYLLVFFIILWVSREAFFYLI</sequence>
<reference key="1">
    <citation type="journal article" date="1996" name="Science">
        <title>Complete genome sequence of the methanogenic archaeon, Methanococcus jannaschii.</title>
        <authorList>
            <person name="Bult C.J."/>
            <person name="White O."/>
            <person name="Olsen G.J."/>
            <person name="Zhou L."/>
            <person name="Fleischmann R.D."/>
            <person name="Sutton G.G."/>
            <person name="Blake J.A."/>
            <person name="FitzGerald L.M."/>
            <person name="Clayton R.A."/>
            <person name="Gocayne J.D."/>
            <person name="Kerlavage A.R."/>
            <person name="Dougherty B.A."/>
            <person name="Tomb J.-F."/>
            <person name="Adams M.D."/>
            <person name="Reich C.I."/>
            <person name="Overbeek R."/>
            <person name="Kirkness E.F."/>
            <person name="Weinstock K.G."/>
            <person name="Merrick J.M."/>
            <person name="Glodek A."/>
            <person name="Scott J.L."/>
            <person name="Geoghagen N.S.M."/>
            <person name="Weidman J.F."/>
            <person name="Fuhrmann J.L."/>
            <person name="Nguyen D."/>
            <person name="Utterback T.R."/>
            <person name="Kelley J.M."/>
            <person name="Peterson J.D."/>
            <person name="Sadow P.W."/>
            <person name="Hanna M.C."/>
            <person name="Cotton M.D."/>
            <person name="Roberts K.M."/>
            <person name="Hurst M.A."/>
            <person name="Kaine B.P."/>
            <person name="Borodovsky M."/>
            <person name="Klenk H.-P."/>
            <person name="Fraser C.M."/>
            <person name="Smith H.O."/>
            <person name="Woese C.R."/>
            <person name="Venter J.C."/>
        </authorList>
    </citation>
    <scope>NUCLEOTIDE SEQUENCE [LARGE SCALE GENOMIC DNA]</scope>
    <source>
        <strain>ATCC 43067 / DSM 2661 / JAL-1 / JCM 10045 / NBRC 100440</strain>
    </source>
</reference>
<proteinExistence type="inferred from homology"/>
<organism>
    <name type="scientific">Methanocaldococcus jannaschii (strain ATCC 43067 / DSM 2661 / JAL-1 / JCM 10045 / NBRC 100440)</name>
    <name type="common">Methanococcus jannaschii</name>
    <dbReference type="NCBI Taxonomy" id="243232"/>
    <lineage>
        <taxon>Archaea</taxon>
        <taxon>Methanobacteriati</taxon>
        <taxon>Methanobacteriota</taxon>
        <taxon>Methanomada group</taxon>
        <taxon>Methanococci</taxon>
        <taxon>Methanococcales</taxon>
        <taxon>Methanocaldococcaceae</taxon>
        <taxon>Methanocaldococcus</taxon>
    </lineage>
</organism>
<comment type="subcellular location">
    <subcellularLocation>
        <location evidence="2">Membrane</location>
        <topology evidence="2">Single-pass membrane protein</topology>
    </subcellularLocation>
</comment>
<comment type="similarity">
    <text evidence="2">Belongs to the M.jannaschii MJ0023/MJ0349/MJ1072/MJ1074/MJ1107/MJECL16 family.</text>
</comment>
<gene>
    <name type="ordered locus">MJECL16</name>
</gene>
<evidence type="ECO:0000255" key="1"/>
<evidence type="ECO:0000305" key="2"/>
<name>Y3516_METJA</name>
<dbReference type="EMBL" id="L77118">
    <property type="protein sequence ID" value="AAC37072.1"/>
    <property type="molecule type" value="Genomic_DNA"/>
</dbReference>
<dbReference type="PIR" id="H64511">
    <property type="entry name" value="H64511"/>
</dbReference>
<dbReference type="SMR" id="Q60263"/>
<dbReference type="PaxDb" id="243232-MJ_ECL16"/>
<dbReference type="EnsemblBacteria" id="AAC37072">
    <property type="protein sequence ID" value="AAC37072"/>
    <property type="gene ID" value="MJ_ECL16"/>
</dbReference>
<dbReference type="KEGG" id="mja:MJ_ECL16"/>
<dbReference type="eggNOG" id="arCOG09652">
    <property type="taxonomic scope" value="Archaea"/>
</dbReference>
<dbReference type="HOGENOM" id="CLU_2748196_0_0_2"/>
<dbReference type="InParanoid" id="Q60263"/>
<dbReference type="PhylomeDB" id="Q60263"/>
<dbReference type="Proteomes" id="UP000000805">
    <property type="component" value="Plasmid pDSM2661_1"/>
</dbReference>
<dbReference type="GO" id="GO:0016020">
    <property type="term" value="C:membrane"/>
    <property type="evidence" value="ECO:0007669"/>
    <property type="project" value="UniProtKB-SubCell"/>
</dbReference>
<geneLocation type="plasmid">
    <name>large ECE</name>
</geneLocation>
<feature type="chain" id="PRO_0000107505" description="Uncharacterized protein MJECL16">
    <location>
        <begin position="1"/>
        <end position="70"/>
    </location>
</feature>
<feature type="transmembrane region" description="Helical" evidence="1">
    <location>
        <begin position="50"/>
        <end position="70"/>
    </location>
</feature>